<feature type="chain" id="PRO_1000057874" description="Indole-3-glycerol phosphate synthase">
    <location>
        <begin position="1"/>
        <end position="295"/>
    </location>
</feature>
<evidence type="ECO:0000255" key="1">
    <source>
        <dbReference type="HAMAP-Rule" id="MF_00134"/>
    </source>
</evidence>
<keyword id="KW-0028">Amino-acid biosynthesis</keyword>
<keyword id="KW-0057">Aromatic amino acid biosynthesis</keyword>
<keyword id="KW-0210">Decarboxylase</keyword>
<keyword id="KW-0456">Lyase</keyword>
<keyword id="KW-0822">Tryptophan biosynthesis</keyword>
<comment type="catalytic activity">
    <reaction evidence="1">
        <text>1-(2-carboxyphenylamino)-1-deoxy-D-ribulose 5-phosphate + H(+) = (1S,2R)-1-C-(indol-3-yl)glycerol 3-phosphate + CO2 + H2O</text>
        <dbReference type="Rhea" id="RHEA:23476"/>
        <dbReference type="ChEBI" id="CHEBI:15377"/>
        <dbReference type="ChEBI" id="CHEBI:15378"/>
        <dbReference type="ChEBI" id="CHEBI:16526"/>
        <dbReference type="ChEBI" id="CHEBI:58613"/>
        <dbReference type="ChEBI" id="CHEBI:58866"/>
        <dbReference type="EC" id="4.1.1.48"/>
    </reaction>
</comment>
<comment type="pathway">
    <text evidence="1">Amino-acid biosynthesis; L-tryptophan biosynthesis; L-tryptophan from chorismate: step 4/5.</text>
</comment>
<comment type="similarity">
    <text evidence="1">Belongs to the TrpC family.</text>
</comment>
<sequence length="295" mass="33580">MEIRRRPPNPTVRVENLEYAVPHREAQAKNILEEIVWHKDIEIKNFKKIVSLEDLIKKIENLPAPKDFYKNILESKIKPGVIAEIKKASPSKGVIRKDFNPKDIAICYEGLGASCISVLTDKRFFQGSYEILETVRKSTNLPLLCKDFIISAYQIYKARVSGADAILLIAAILSDDDLIYLKKIADNLKMSVLVEVHNDNELERILKLKSFNLIGINNRDLKTFKTDLKTSIELMNVYADIFSKQNILPISESGINCAKDLESLRSIGIKGVLIGETFMRESDIEESFNKLFYSI</sequence>
<gene>
    <name evidence="1" type="primary">trpC</name>
    <name type="ordered locus">P9215_15251</name>
</gene>
<protein>
    <recommendedName>
        <fullName evidence="1">Indole-3-glycerol phosphate synthase</fullName>
        <shortName evidence="1">IGPS</shortName>
        <ecNumber evidence="1">4.1.1.48</ecNumber>
    </recommendedName>
</protein>
<accession>A8G6A7</accession>
<proteinExistence type="inferred from homology"/>
<dbReference type="EC" id="4.1.1.48" evidence="1"/>
<dbReference type="EMBL" id="CP000825">
    <property type="protein sequence ID" value="ABV51138.1"/>
    <property type="molecule type" value="Genomic_DNA"/>
</dbReference>
<dbReference type="RefSeq" id="WP_012008185.1">
    <property type="nucleotide sequence ID" value="NC_009840.1"/>
</dbReference>
<dbReference type="SMR" id="A8G6A7"/>
<dbReference type="STRING" id="93060.P9215_15251"/>
<dbReference type="KEGG" id="pmh:P9215_15251"/>
<dbReference type="eggNOG" id="COG0134">
    <property type="taxonomic scope" value="Bacteria"/>
</dbReference>
<dbReference type="HOGENOM" id="CLU_034247_1_0_3"/>
<dbReference type="OrthoDB" id="9804217at2"/>
<dbReference type="UniPathway" id="UPA00035">
    <property type="reaction ID" value="UER00043"/>
</dbReference>
<dbReference type="Proteomes" id="UP000002014">
    <property type="component" value="Chromosome"/>
</dbReference>
<dbReference type="GO" id="GO:0004425">
    <property type="term" value="F:indole-3-glycerol-phosphate synthase activity"/>
    <property type="evidence" value="ECO:0007669"/>
    <property type="project" value="UniProtKB-UniRule"/>
</dbReference>
<dbReference type="GO" id="GO:0004640">
    <property type="term" value="F:phosphoribosylanthranilate isomerase activity"/>
    <property type="evidence" value="ECO:0007669"/>
    <property type="project" value="TreeGrafter"/>
</dbReference>
<dbReference type="GO" id="GO:0000162">
    <property type="term" value="P:L-tryptophan biosynthetic process"/>
    <property type="evidence" value="ECO:0007669"/>
    <property type="project" value="UniProtKB-UniRule"/>
</dbReference>
<dbReference type="CDD" id="cd00331">
    <property type="entry name" value="IGPS"/>
    <property type="match status" value="1"/>
</dbReference>
<dbReference type="FunFam" id="3.20.20.70:FF:000024">
    <property type="entry name" value="Indole-3-glycerol phosphate synthase"/>
    <property type="match status" value="1"/>
</dbReference>
<dbReference type="Gene3D" id="3.20.20.70">
    <property type="entry name" value="Aldolase class I"/>
    <property type="match status" value="1"/>
</dbReference>
<dbReference type="HAMAP" id="MF_00134_B">
    <property type="entry name" value="IGPS_B"/>
    <property type="match status" value="1"/>
</dbReference>
<dbReference type="InterPro" id="IPR013785">
    <property type="entry name" value="Aldolase_TIM"/>
</dbReference>
<dbReference type="InterPro" id="IPR045186">
    <property type="entry name" value="Indole-3-glycerol_P_synth"/>
</dbReference>
<dbReference type="InterPro" id="IPR013798">
    <property type="entry name" value="Indole-3-glycerol_P_synth_dom"/>
</dbReference>
<dbReference type="InterPro" id="IPR001468">
    <property type="entry name" value="Indole-3-GlycerolPSynthase_CS"/>
</dbReference>
<dbReference type="InterPro" id="IPR011060">
    <property type="entry name" value="RibuloseP-bd_barrel"/>
</dbReference>
<dbReference type="NCBIfam" id="NF001372">
    <property type="entry name" value="PRK00278.1-4"/>
    <property type="match status" value="1"/>
</dbReference>
<dbReference type="NCBIfam" id="NF001377">
    <property type="entry name" value="PRK00278.2-4"/>
    <property type="match status" value="1"/>
</dbReference>
<dbReference type="PANTHER" id="PTHR22854:SF2">
    <property type="entry name" value="INDOLE-3-GLYCEROL-PHOSPHATE SYNTHASE"/>
    <property type="match status" value="1"/>
</dbReference>
<dbReference type="PANTHER" id="PTHR22854">
    <property type="entry name" value="TRYPTOPHAN BIOSYNTHESIS PROTEIN"/>
    <property type="match status" value="1"/>
</dbReference>
<dbReference type="Pfam" id="PF00218">
    <property type="entry name" value="IGPS"/>
    <property type="match status" value="1"/>
</dbReference>
<dbReference type="SUPFAM" id="SSF51366">
    <property type="entry name" value="Ribulose-phoshate binding barrel"/>
    <property type="match status" value="1"/>
</dbReference>
<dbReference type="PROSITE" id="PS00614">
    <property type="entry name" value="IGPS"/>
    <property type="match status" value="1"/>
</dbReference>
<organism>
    <name type="scientific">Prochlorococcus marinus (strain MIT 9215)</name>
    <dbReference type="NCBI Taxonomy" id="93060"/>
    <lineage>
        <taxon>Bacteria</taxon>
        <taxon>Bacillati</taxon>
        <taxon>Cyanobacteriota</taxon>
        <taxon>Cyanophyceae</taxon>
        <taxon>Synechococcales</taxon>
        <taxon>Prochlorococcaceae</taxon>
        <taxon>Prochlorococcus</taxon>
    </lineage>
</organism>
<name>TRPC_PROM2</name>
<reference key="1">
    <citation type="journal article" date="2007" name="PLoS Genet.">
        <title>Patterns and implications of gene gain and loss in the evolution of Prochlorococcus.</title>
        <authorList>
            <person name="Kettler G.C."/>
            <person name="Martiny A.C."/>
            <person name="Huang K."/>
            <person name="Zucker J."/>
            <person name="Coleman M.L."/>
            <person name="Rodrigue S."/>
            <person name="Chen F."/>
            <person name="Lapidus A."/>
            <person name="Ferriera S."/>
            <person name="Johnson J."/>
            <person name="Steglich C."/>
            <person name="Church G.M."/>
            <person name="Richardson P."/>
            <person name="Chisholm S.W."/>
        </authorList>
    </citation>
    <scope>NUCLEOTIDE SEQUENCE [LARGE SCALE GENOMIC DNA]</scope>
    <source>
        <strain>MIT 9215</strain>
    </source>
</reference>